<protein>
    <recommendedName>
        <fullName evidence="1">Photosystem I P700 chlorophyll a apoprotein A1</fullName>
        <ecNumber evidence="1">1.97.1.12</ecNumber>
    </recommendedName>
    <alternativeName>
        <fullName evidence="1">PSI-A</fullName>
    </alternativeName>
    <alternativeName>
        <fullName evidence="1">PsaA</fullName>
    </alternativeName>
</protein>
<keyword id="KW-0004">4Fe-4S</keyword>
<keyword id="KW-0148">Chlorophyll</keyword>
<keyword id="KW-0150">Chloroplast</keyword>
<keyword id="KW-0157">Chromophore</keyword>
<keyword id="KW-0249">Electron transport</keyword>
<keyword id="KW-0408">Iron</keyword>
<keyword id="KW-0411">Iron-sulfur</keyword>
<keyword id="KW-0460">Magnesium</keyword>
<keyword id="KW-0472">Membrane</keyword>
<keyword id="KW-0479">Metal-binding</keyword>
<keyword id="KW-0560">Oxidoreductase</keyword>
<keyword id="KW-0602">Photosynthesis</keyword>
<keyword id="KW-0603">Photosystem I</keyword>
<keyword id="KW-0934">Plastid</keyword>
<keyword id="KW-0793">Thylakoid</keyword>
<keyword id="KW-0812">Transmembrane</keyword>
<keyword id="KW-1133">Transmembrane helix</keyword>
<keyword id="KW-0813">Transport</keyword>
<reference key="1">
    <citation type="submission" date="2007-03" db="EMBL/GenBank/DDBJ databases">
        <title>Sequencing analysis of Arabis hirsuta chloroplast DNA.</title>
        <authorList>
            <person name="Hosouchi T."/>
            <person name="Tsuruoka H."/>
            <person name="Kotani H."/>
        </authorList>
    </citation>
    <scope>NUCLEOTIDE SEQUENCE [LARGE SCALE GENOMIC DNA]</scope>
</reference>
<feature type="chain" id="PRO_0000294216" description="Photosystem I P700 chlorophyll a apoprotein A1">
    <location>
        <begin position="1"/>
        <end position="750"/>
    </location>
</feature>
<feature type="transmembrane region" description="Helical; Name=I" evidence="1">
    <location>
        <begin position="70"/>
        <end position="93"/>
    </location>
</feature>
<feature type="transmembrane region" description="Helical; Name=II" evidence="1">
    <location>
        <begin position="156"/>
        <end position="179"/>
    </location>
</feature>
<feature type="transmembrane region" description="Helical; Name=III" evidence="1">
    <location>
        <begin position="195"/>
        <end position="219"/>
    </location>
</feature>
<feature type="transmembrane region" description="Helical; Name=IV" evidence="1">
    <location>
        <begin position="291"/>
        <end position="309"/>
    </location>
</feature>
<feature type="transmembrane region" description="Helical; Name=V" evidence="1">
    <location>
        <begin position="346"/>
        <end position="369"/>
    </location>
</feature>
<feature type="transmembrane region" description="Helical; Name=VI" evidence="1">
    <location>
        <begin position="385"/>
        <end position="411"/>
    </location>
</feature>
<feature type="transmembrane region" description="Helical; Name=VII" evidence="1">
    <location>
        <begin position="433"/>
        <end position="455"/>
    </location>
</feature>
<feature type="transmembrane region" description="Helical; Name=VIII" evidence="1">
    <location>
        <begin position="531"/>
        <end position="549"/>
    </location>
</feature>
<feature type="transmembrane region" description="Helical; Name=IX" evidence="1">
    <location>
        <begin position="589"/>
        <end position="610"/>
    </location>
</feature>
<feature type="transmembrane region" description="Helical; Name=X" evidence="1">
    <location>
        <begin position="664"/>
        <end position="686"/>
    </location>
</feature>
<feature type="transmembrane region" description="Helical; Name=XI" evidence="1">
    <location>
        <begin position="724"/>
        <end position="744"/>
    </location>
</feature>
<feature type="binding site" evidence="1">
    <location>
        <position position="573"/>
    </location>
    <ligand>
        <name>[4Fe-4S] cluster</name>
        <dbReference type="ChEBI" id="CHEBI:49883"/>
        <note>ligand shared between dimeric partners</note>
    </ligand>
</feature>
<feature type="binding site" evidence="1">
    <location>
        <position position="582"/>
    </location>
    <ligand>
        <name>[4Fe-4S] cluster</name>
        <dbReference type="ChEBI" id="CHEBI:49883"/>
        <note>ligand shared between dimeric partners</note>
    </ligand>
</feature>
<feature type="binding site" description="axial binding residue" evidence="1">
    <location>
        <position position="675"/>
    </location>
    <ligand>
        <name>chlorophyll a'</name>
        <dbReference type="ChEBI" id="CHEBI:189419"/>
        <label>A1</label>
    </ligand>
    <ligandPart>
        <name>Mg</name>
        <dbReference type="ChEBI" id="CHEBI:25107"/>
    </ligandPart>
</feature>
<feature type="binding site" description="axial binding residue" evidence="1">
    <location>
        <position position="683"/>
    </location>
    <ligand>
        <name>chlorophyll a</name>
        <dbReference type="ChEBI" id="CHEBI:58416"/>
        <label>A3</label>
    </ligand>
    <ligandPart>
        <name>Mg</name>
        <dbReference type="ChEBI" id="CHEBI:25107"/>
    </ligandPart>
</feature>
<feature type="binding site" evidence="1">
    <location>
        <position position="691"/>
    </location>
    <ligand>
        <name>chlorophyll a</name>
        <dbReference type="ChEBI" id="CHEBI:58416"/>
        <label>A3</label>
    </ligand>
</feature>
<feature type="binding site" evidence="1">
    <location>
        <position position="692"/>
    </location>
    <ligand>
        <name>phylloquinone</name>
        <dbReference type="ChEBI" id="CHEBI:18067"/>
        <label>A</label>
    </ligand>
</feature>
<organism>
    <name type="scientific">Arabis hirsuta</name>
    <name type="common">Hairy rock-cress</name>
    <name type="synonym">Turritis hirsuta</name>
    <dbReference type="NCBI Taxonomy" id="78191"/>
    <lineage>
        <taxon>Eukaryota</taxon>
        <taxon>Viridiplantae</taxon>
        <taxon>Streptophyta</taxon>
        <taxon>Embryophyta</taxon>
        <taxon>Tracheophyta</taxon>
        <taxon>Spermatophyta</taxon>
        <taxon>Magnoliopsida</taxon>
        <taxon>eudicotyledons</taxon>
        <taxon>Gunneridae</taxon>
        <taxon>Pentapetalae</taxon>
        <taxon>rosids</taxon>
        <taxon>malvids</taxon>
        <taxon>Brassicales</taxon>
        <taxon>Brassicaceae</taxon>
        <taxon>Arabideae</taxon>
        <taxon>Arabis</taxon>
    </lineage>
</organism>
<sequence length="750" mass="83233">MIIRSPEPEVKILVDRDPIKTSFEEWAKPGHFSRTIAKGPDTTTWIWNLHADAHDFDSHTSDLEEISRKVFSAHFGQLSIIFLWLSGMYFHGARFSNYEAWLSDPTHIGPSAQVVWPIVGQEILNGDVGGGFRGIQITSGFFQIWRASGITSELQLYCTAIGALVFAALMLFAGWFHYHKAAPKLAWFQDVESMLNHHLAGLLGLGSLSWAGHQVHVSLPINQFLNAGVDPKEIPLPHEFILNRDLLAQLYPSFAEGATPFFTLNWSKYSEFLTFRGGLDPVTGGLWLTDIAHHHLAIAILFLLAGHMYRTNWGIGHGLKDILEAHKGPFTGQGHKGLYEILTTSWHAQLSLNLAMLGSLTIVVAHHMYSMPPYPYLATDYATQLSLFTHHMWIGGFLIVGAAAHAAIFMVRDYDPTNRYNDLLDRVLRHRDAIISHLNWVCIFLGFHSFGLYIHNDTMSALGRPQDMFSDTAIQLQPVFAQWIQNTHALAPGVTAPGETASTSLTWGGGELVTVGGKVALLPIPLGTADFLVHHIHAFTIHVTVLILLKGVLFARSSRLIPDKANLGFRFPCDGPGRGGTCQVSAWDHVFLGLFWMYNAISVVIFHFSWKMQSDVWGSISDQGVVTHITGGNFAQSSITINGWLRDFLWAQASQVIQSYGSSLSAYGLFFLGAHFVWAFSLMFLFSGRGYWQELIESIVWAHNKLKVAPATQPRALSIVQGRAVGVTHYLLGGIATTWAFFLARIIAVG</sequence>
<gene>
    <name evidence="1" type="primary">psaA</name>
</gene>
<evidence type="ECO:0000255" key="1">
    <source>
        <dbReference type="HAMAP-Rule" id="MF_00458"/>
    </source>
</evidence>
<accession>A4QK18</accession>
<proteinExistence type="inferred from homology"/>
<comment type="function">
    <text>PsaA and PsaB bind P700, the primary electron donor of photosystem I (PSI), as well as the electron acceptors A0, A1 and FX. PSI is a plastocyanin-ferredoxin oxidoreductase, converting photonic excitation into a charge separation, which transfers an electron from the donor P700 chlorophyll pair to the spectroscopically characterized acceptors A0, A1, FX, FA and FB in turn. Oxidized P700 is reduced on the lumenal side of the thylakoid membrane by plastocyanin.</text>
</comment>
<comment type="catalytic activity">
    <reaction evidence="1">
        <text>reduced [plastocyanin] + hnu + oxidized [2Fe-2S]-[ferredoxin] = oxidized [plastocyanin] + reduced [2Fe-2S]-[ferredoxin]</text>
        <dbReference type="Rhea" id="RHEA:30407"/>
        <dbReference type="Rhea" id="RHEA-COMP:10000"/>
        <dbReference type="Rhea" id="RHEA-COMP:10001"/>
        <dbReference type="Rhea" id="RHEA-COMP:10039"/>
        <dbReference type="Rhea" id="RHEA-COMP:10040"/>
        <dbReference type="ChEBI" id="CHEBI:29036"/>
        <dbReference type="ChEBI" id="CHEBI:30212"/>
        <dbReference type="ChEBI" id="CHEBI:33737"/>
        <dbReference type="ChEBI" id="CHEBI:33738"/>
        <dbReference type="ChEBI" id="CHEBI:49552"/>
        <dbReference type="EC" id="1.97.1.12"/>
    </reaction>
</comment>
<comment type="cofactor">
    <text evidence="1">P700 is a chlorophyll a/chlorophyll a' dimer, A0 is one or more chlorophyll a, A1 is one or both phylloquinones and FX is a shared 4Fe-4S iron-sulfur center.</text>
</comment>
<comment type="subunit">
    <text evidence="1">The PsaA/B heterodimer binds the P700 chlorophyll special pair and subsequent electron acceptors. PSI consists of a core antenna complex that captures photons, and an electron transfer chain that converts photonic excitation into a charge separation. The eukaryotic PSI reaction center is composed of at least 11 subunits.</text>
</comment>
<comment type="subcellular location">
    <subcellularLocation>
        <location evidence="1">Plastid</location>
        <location evidence="1">Chloroplast thylakoid membrane</location>
        <topology evidence="1">Multi-pass membrane protein</topology>
    </subcellularLocation>
</comment>
<comment type="similarity">
    <text evidence="1">Belongs to the PsaA/PsaB family.</text>
</comment>
<geneLocation type="chloroplast"/>
<name>PSAA_ARAHI</name>
<dbReference type="EC" id="1.97.1.12" evidence="1"/>
<dbReference type="EMBL" id="AP009369">
    <property type="protein sequence ID" value="BAF50023.1"/>
    <property type="molecule type" value="Genomic_DNA"/>
</dbReference>
<dbReference type="RefSeq" id="YP_001123199.1">
    <property type="nucleotide sequence ID" value="NC_009268.1"/>
</dbReference>
<dbReference type="SMR" id="A4QK18"/>
<dbReference type="GeneID" id="4962534"/>
<dbReference type="GO" id="GO:0009535">
    <property type="term" value="C:chloroplast thylakoid membrane"/>
    <property type="evidence" value="ECO:0007669"/>
    <property type="project" value="UniProtKB-SubCell"/>
</dbReference>
<dbReference type="GO" id="GO:0009522">
    <property type="term" value="C:photosystem I"/>
    <property type="evidence" value="ECO:0007669"/>
    <property type="project" value="UniProtKB-KW"/>
</dbReference>
<dbReference type="GO" id="GO:0051539">
    <property type="term" value="F:4 iron, 4 sulfur cluster binding"/>
    <property type="evidence" value="ECO:0007669"/>
    <property type="project" value="UniProtKB-KW"/>
</dbReference>
<dbReference type="GO" id="GO:0016168">
    <property type="term" value="F:chlorophyll binding"/>
    <property type="evidence" value="ECO:0007669"/>
    <property type="project" value="UniProtKB-KW"/>
</dbReference>
<dbReference type="GO" id="GO:0009055">
    <property type="term" value="F:electron transfer activity"/>
    <property type="evidence" value="ECO:0007669"/>
    <property type="project" value="UniProtKB-UniRule"/>
</dbReference>
<dbReference type="GO" id="GO:0000287">
    <property type="term" value="F:magnesium ion binding"/>
    <property type="evidence" value="ECO:0007669"/>
    <property type="project" value="UniProtKB-UniRule"/>
</dbReference>
<dbReference type="GO" id="GO:0016491">
    <property type="term" value="F:oxidoreductase activity"/>
    <property type="evidence" value="ECO:0007669"/>
    <property type="project" value="UniProtKB-KW"/>
</dbReference>
<dbReference type="GO" id="GO:0015979">
    <property type="term" value="P:photosynthesis"/>
    <property type="evidence" value="ECO:0007669"/>
    <property type="project" value="UniProtKB-UniRule"/>
</dbReference>
<dbReference type="FunFam" id="1.20.1130.10:FF:000001">
    <property type="entry name" value="Photosystem I P700 chlorophyll a apoprotein A2"/>
    <property type="match status" value="1"/>
</dbReference>
<dbReference type="Gene3D" id="1.20.1130.10">
    <property type="entry name" value="Photosystem I PsaA/PsaB"/>
    <property type="match status" value="1"/>
</dbReference>
<dbReference type="HAMAP" id="MF_00458">
    <property type="entry name" value="PSI_PsaA"/>
    <property type="match status" value="1"/>
</dbReference>
<dbReference type="InterPro" id="IPR006243">
    <property type="entry name" value="PSI_PsaA"/>
</dbReference>
<dbReference type="InterPro" id="IPR001280">
    <property type="entry name" value="PSI_PsaA/B"/>
</dbReference>
<dbReference type="InterPro" id="IPR020586">
    <property type="entry name" value="PSI_PsaA/B_CS"/>
</dbReference>
<dbReference type="InterPro" id="IPR036408">
    <property type="entry name" value="PSI_PsaA/B_sf"/>
</dbReference>
<dbReference type="NCBIfam" id="TIGR01335">
    <property type="entry name" value="psaA"/>
    <property type="match status" value="1"/>
</dbReference>
<dbReference type="PANTHER" id="PTHR30128">
    <property type="entry name" value="OUTER MEMBRANE PROTEIN, OMPA-RELATED"/>
    <property type="match status" value="1"/>
</dbReference>
<dbReference type="PANTHER" id="PTHR30128:SF19">
    <property type="entry name" value="PHOTOSYSTEM I P700 CHLOROPHYLL A APOPROTEIN A1-RELATED"/>
    <property type="match status" value="1"/>
</dbReference>
<dbReference type="Pfam" id="PF00223">
    <property type="entry name" value="PsaA_PsaB"/>
    <property type="match status" value="1"/>
</dbReference>
<dbReference type="PIRSF" id="PIRSF002905">
    <property type="entry name" value="PSI_A"/>
    <property type="match status" value="1"/>
</dbReference>
<dbReference type="PRINTS" id="PR00257">
    <property type="entry name" value="PHOTSYSPSAAB"/>
</dbReference>
<dbReference type="SUPFAM" id="SSF81558">
    <property type="entry name" value="Photosystem I subunits PsaA/PsaB"/>
    <property type="match status" value="1"/>
</dbReference>
<dbReference type="PROSITE" id="PS00419">
    <property type="entry name" value="PHOTOSYSTEM_I_PSAAB"/>
    <property type="match status" value="1"/>
</dbReference>